<gene>
    <name evidence="2" type="primary">infB</name>
    <name type="ordered locus">SeHA_C3581</name>
</gene>
<comment type="function">
    <text evidence="2">One of the essential components for the initiation of protein synthesis. Protects formylmethionyl-tRNA from spontaneous hydrolysis and promotes its binding to the 30S ribosomal subunits. Also involved in the hydrolysis of GTP during the formation of the 70S ribosomal complex.</text>
</comment>
<comment type="subcellular location">
    <subcellularLocation>
        <location evidence="2">Cytoplasm</location>
    </subcellularLocation>
</comment>
<comment type="similarity">
    <text evidence="2">Belongs to the TRAFAC class translation factor GTPase superfamily. Classic translation factor GTPase family. IF-2 subfamily.</text>
</comment>
<dbReference type="EMBL" id="CP001120">
    <property type="protein sequence ID" value="ACF68191.1"/>
    <property type="molecule type" value="Genomic_DNA"/>
</dbReference>
<dbReference type="RefSeq" id="WP_000133064.1">
    <property type="nucleotide sequence ID" value="NC_011083.1"/>
</dbReference>
<dbReference type="SMR" id="B4TJ06"/>
<dbReference type="KEGG" id="seh:SeHA_C3581"/>
<dbReference type="HOGENOM" id="CLU_006301_6_3_6"/>
<dbReference type="Proteomes" id="UP000001866">
    <property type="component" value="Chromosome"/>
</dbReference>
<dbReference type="GO" id="GO:0005829">
    <property type="term" value="C:cytosol"/>
    <property type="evidence" value="ECO:0007669"/>
    <property type="project" value="TreeGrafter"/>
</dbReference>
<dbReference type="GO" id="GO:0005525">
    <property type="term" value="F:GTP binding"/>
    <property type="evidence" value="ECO:0007669"/>
    <property type="project" value="UniProtKB-KW"/>
</dbReference>
<dbReference type="GO" id="GO:0003924">
    <property type="term" value="F:GTPase activity"/>
    <property type="evidence" value="ECO:0007669"/>
    <property type="project" value="UniProtKB-UniRule"/>
</dbReference>
<dbReference type="GO" id="GO:0097216">
    <property type="term" value="F:guanosine tetraphosphate binding"/>
    <property type="evidence" value="ECO:0007669"/>
    <property type="project" value="UniProtKB-ARBA"/>
</dbReference>
<dbReference type="GO" id="GO:0003743">
    <property type="term" value="F:translation initiation factor activity"/>
    <property type="evidence" value="ECO:0007669"/>
    <property type="project" value="UniProtKB-UniRule"/>
</dbReference>
<dbReference type="CDD" id="cd01887">
    <property type="entry name" value="IF2_eIF5B"/>
    <property type="match status" value="1"/>
</dbReference>
<dbReference type="CDD" id="cd03702">
    <property type="entry name" value="IF2_mtIF2_II"/>
    <property type="match status" value="1"/>
</dbReference>
<dbReference type="CDD" id="cd03692">
    <property type="entry name" value="mtIF2_IVc"/>
    <property type="match status" value="1"/>
</dbReference>
<dbReference type="FunFam" id="2.40.30.10:FF:000007">
    <property type="entry name" value="Translation initiation factor IF-2"/>
    <property type="match status" value="1"/>
</dbReference>
<dbReference type="FunFam" id="2.40.30.10:FF:000008">
    <property type="entry name" value="Translation initiation factor IF-2"/>
    <property type="match status" value="1"/>
</dbReference>
<dbReference type="FunFam" id="3.30.56.50:FF:000001">
    <property type="entry name" value="Translation initiation factor IF-2"/>
    <property type="match status" value="1"/>
</dbReference>
<dbReference type="FunFam" id="3.40.50.10050:FF:000001">
    <property type="entry name" value="Translation initiation factor IF-2"/>
    <property type="match status" value="1"/>
</dbReference>
<dbReference type="FunFam" id="3.40.50.300:FF:000019">
    <property type="entry name" value="Translation initiation factor IF-2"/>
    <property type="match status" value="1"/>
</dbReference>
<dbReference type="Gene3D" id="3.40.50.300">
    <property type="entry name" value="P-loop containing nucleotide triphosphate hydrolases"/>
    <property type="match status" value="1"/>
</dbReference>
<dbReference type="Gene3D" id="3.30.56.50">
    <property type="entry name" value="Putative DNA-binding domain, N-terminal subdomain of bacterial translation initiation factor IF2"/>
    <property type="match status" value="1"/>
</dbReference>
<dbReference type="Gene3D" id="2.40.30.10">
    <property type="entry name" value="Translation factors"/>
    <property type="match status" value="2"/>
</dbReference>
<dbReference type="Gene3D" id="3.40.50.10050">
    <property type="entry name" value="Translation initiation factor IF- 2, domain 3"/>
    <property type="match status" value="1"/>
</dbReference>
<dbReference type="HAMAP" id="MF_00100_B">
    <property type="entry name" value="IF_2_B"/>
    <property type="match status" value="1"/>
</dbReference>
<dbReference type="InterPro" id="IPR009061">
    <property type="entry name" value="DNA-bd_dom_put_sf"/>
</dbReference>
<dbReference type="InterPro" id="IPR053905">
    <property type="entry name" value="EF-G-like_DII"/>
</dbReference>
<dbReference type="InterPro" id="IPR004161">
    <property type="entry name" value="EFTu-like_2"/>
</dbReference>
<dbReference type="InterPro" id="IPR013575">
    <property type="entry name" value="IF2_assoc_dom_bac"/>
</dbReference>
<dbReference type="InterPro" id="IPR044145">
    <property type="entry name" value="IF2_II"/>
</dbReference>
<dbReference type="InterPro" id="IPR006847">
    <property type="entry name" value="IF2_N"/>
</dbReference>
<dbReference type="InterPro" id="IPR027417">
    <property type="entry name" value="P-loop_NTPase"/>
</dbReference>
<dbReference type="InterPro" id="IPR005225">
    <property type="entry name" value="Small_GTP-bd"/>
</dbReference>
<dbReference type="InterPro" id="IPR000795">
    <property type="entry name" value="T_Tr_GTP-bd_dom"/>
</dbReference>
<dbReference type="InterPro" id="IPR000178">
    <property type="entry name" value="TF_IF2_bacterial-like"/>
</dbReference>
<dbReference type="InterPro" id="IPR015760">
    <property type="entry name" value="TIF_IF2"/>
</dbReference>
<dbReference type="InterPro" id="IPR023115">
    <property type="entry name" value="TIF_IF2_dom3"/>
</dbReference>
<dbReference type="InterPro" id="IPR036925">
    <property type="entry name" value="TIF_IF2_dom3_sf"/>
</dbReference>
<dbReference type="InterPro" id="IPR009000">
    <property type="entry name" value="Transl_B-barrel_sf"/>
</dbReference>
<dbReference type="NCBIfam" id="TIGR00487">
    <property type="entry name" value="IF-2"/>
    <property type="match status" value="1"/>
</dbReference>
<dbReference type="NCBIfam" id="TIGR00231">
    <property type="entry name" value="small_GTP"/>
    <property type="match status" value="1"/>
</dbReference>
<dbReference type="PANTHER" id="PTHR43381:SF5">
    <property type="entry name" value="TR-TYPE G DOMAIN-CONTAINING PROTEIN"/>
    <property type="match status" value="1"/>
</dbReference>
<dbReference type="PANTHER" id="PTHR43381">
    <property type="entry name" value="TRANSLATION INITIATION FACTOR IF-2-RELATED"/>
    <property type="match status" value="1"/>
</dbReference>
<dbReference type="Pfam" id="PF22042">
    <property type="entry name" value="EF-G_D2"/>
    <property type="match status" value="1"/>
</dbReference>
<dbReference type="Pfam" id="PF00009">
    <property type="entry name" value="GTP_EFTU"/>
    <property type="match status" value="1"/>
</dbReference>
<dbReference type="Pfam" id="PF03144">
    <property type="entry name" value="GTP_EFTU_D2"/>
    <property type="match status" value="1"/>
</dbReference>
<dbReference type="Pfam" id="PF11987">
    <property type="entry name" value="IF-2"/>
    <property type="match status" value="1"/>
</dbReference>
<dbReference type="Pfam" id="PF08364">
    <property type="entry name" value="IF2_assoc"/>
    <property type="match status" value="1"/>
</dbReference>
<dbReference type="Pfam" id="PF04760">
    <property type="entry name" value="IF2_N"/>
    <property type="match status" value="2"/>
</dbReference>
<dbReference type="SUPFAM" id="SSF52156">
    <property type="entry name" value="Initiation factor IF2/eIF5b, domain 3"/>
    <property type="match status" value="1"/>
</dbReference>
<dbReference type="SUPFAM" id="SSF52540">
    <property type="entry name" value="P-loop containing nucleoside triphosphate hydrolases"/>
    <property type="match status" value="1"/>
</dbReference>
<dbReference type="SUPFAM" id="SSF46955">
    <property type="entry name" value="Putative DNA-binding domain"/>
    <property type="match status" value="1"/>
</dbReference>
<dbReference type="SUPFAM" id="SSF50447">
    <property type="entry name" value="Translation proteins"/>
    <property type="match status" value="2"/>
</dbReference>
<dbReference type="PROSITE" id="PS51722">
    <property type="entry name" value="G_TR_2"/>
    <property type="match status" value="1"/>
</dbReference>
<dbReference type="PROSITE" id="PS01176">
    <property type="entry name" value="IF2"/>
    <property type="match status" value="1"/>
</dbReference>
<feature type="chain" id="PRO_1000093821" description="Translation initiation factor IF-2">
    <location>
        <begin position="1"/>
        <end position="892"/>
    </location>
</feature>
<feature type="domain" description="tr-type G">
    <location>
        <begin position="391"/>
        <end position="560"/>
    </location>
</feature>
<feature type="region of interest" description="Disordered" evidence="3">
    <location>
        <begin position="88"/>
        <end position="305"/>
    </location>
</feature>
<feature type="region of interest" description="G1" evidence="1">
    <location>
        <begin position="400"/>
        <end position="407"/>
    </location>
</feature>
<feature type="region of interest" description="G2" evidence="1">
    <location>
        <begin position="425"/>
        <end position="429"/>
    </location>
</feature>
<feature type="region of interest" description="G3" evidence="1">
    <location>
        <begin position="446"/>
        <end position="449"/>
    </location>
</feature>
<feature type="region of interest" description="G4" evidence="1">
    <location>
        <begin position="500"/>
        <end position="503"/>
    </location>
</feature>
<feature type="region of interest" description="G5" evidence="1">
    <location>
        <begin position="536"/>
        <end position="538"/>
    </location>
</feature>
<feature type="compositionally biased region" description="Basic and acidic residues" evidence="3">
    <location>
        <begin position="93"/>
        <end position="159"/>
    </location>
</feature>
<feature type="compositionally biased region" description="Basic and acidic residues" evidence="3">
    <location>
        <begin position="166"/>
        <end position="216"/>
    </location>
</feature>
<feature type="compositionally biased region" description="Basic residues" evidence="3">
    <location>
        <begin position="254"/>
        <end position="269"/>
    </location>
</feature>
<feature type="compositionally biased region" description="Basic and acidic residues" evidence="3">
    <location>
        <begin position="270"/>
        <end position="282"/>
    </location>
</feature>
<feature type="binding site" evidence="2">
    <location>
        <begin position="400"/>
        <end position="407"/>
    </location>
    <ligand>
        <name>GTP</name>
        <dbReference type="ChEBI" id="CHEBI:37565"/>
    </ligand>
</feature>
<feature type="binding site" evidence="2">
    <location>
        <begin position="446"/>
        <end position="450"/>
    </location>
    <ligand>
        <name>GTP</name>
        <dbReference type="ChEBI" id="CHEBI:37565"/>
    </ligand>
</feature>
<feature type="binding site" evidence="2">
    <location>
        <begin position="500"/>
        <end position="503"/>
    </location>
    <ligand>
        <name>GTP</name>
        <dbReference type="ChEBI" id="CHEBI:37565"/>
    </ligand>
</feature>
<reference key="1">
    <citation type="journal article" date="2011" name="J. Bacteriol.">
        <title>Comparative genomics of 28 Salmonella enterica isolates: evidence for CRISPR-mediated adaptive sublineage evolution.</title>
        <authorList>
            <person name="Fricke W.F."/>
            <person name="Mammel M.K."/>
            <person name="McDermott P.F."/>
            <person name="Tartera C."/>
            <person name="White D.G."/>
            <person name="Leclerc J.E."/>
            <person name="Ravel J."/>
            <person name="Cebula T.A."/>
        </authorList>
    </citation>
    <scope>NUCLEOTIDE SEQUENCE [LARGE SCALE GENOMIC DNA]</scope>
    <source>
        <strain>SL476</strain>
    </source>
</reference>
<keyword id="KW-0963">Cytoplasm</keyword>
<keyword id="KW-0342">GTP-binding</keyword>
<keyword id="KW-0396">Initiation factor</keyword>
<keyword id="KW-0547">Nucleotide-binding</keyword>
<keyword id="KW-0648">Protein biosynthesis</keyword>
<evidence type="ECO:0000250" key="1"/>
<evidence type="ECO:0000255" key="2">
    <source>
        <dbReference type="HAMAP-Rule" id="MF_00100"/>
    </source>
</evidence>
<evidence type="ECO:0000256" key="3">
    <source>
        <dbReference type="SAM" id="MobiDB-lite"/>
    </source>
</evidence>
<accession>B4TJ06</accession>
<organism>
    <name type="scientific">Salmonella heidelberg (strain SL476)</name>
    <dbReference type="NCBI Taxonomy" id="454169"/>
    <lineage>
        <taxon>Bacteria</taxon>
        <taxon>Pseudomonadati</taxon>
        <taxon>Pseudomonadota</taxon>
        <taxon>Gammaproteobacteria</taxon>
        <taxon>Enterobacterales</taxon>
        <taxon>Enterobacteriaceae</taxon>
        <taxon>Salmonella</taxon>
    </lineage>
</organism>
<protein>
    <recommendedName>
        <fullName evidence="2">Translation initiation factor IF-2</fullName>
    </recommendedName>
</protein>
<name>IF2_SALHS</name>
<proteinExistence type="inferred from homology"/>
<sequence>MTDVTLKALAAERQVSVDRLVQQFADAGIRKSADDSVSAQEKQTLLAHLNREAVSGPDKLTLQRKTRSTLNIPGTGGKSKSVQIEVRKKRTFVKRDPQEAERLAAEEQAQREAEEQARREAEEQAKREAQQKAEREAAEQAKREAAEKAKREAAEKDKVSNQQTDDMTKTAQAEKARRENEAAELKRKAEEEARRKLEEEARRVAEEARRMAEENKWTATPEPVEDTSDYHVTTSQHARQAEDENDREVEGGRGRGRNAKAARPAKKGKHAESKADREEARAAVRGGKGGKRKGSSLQQGFQKPAQAVNRDVVIGETITVGELANKMAVKGSQVIKAMMKLGAMATINQVIDQETAQLVAEEMGHKVILRRENELEEAVMSDRDTGAAAEPRAPVVTIMGHVDHGKTSLLDYIRSTKVASGEAGGITQHIGAYHVETDNGMITFLDTPGHAAFTSMRARGAQATDIVVLVVAADDGVMPQTIEAIQHAKAAGVPVVVAVNKIDKPEADPDRVKNELSQYGILPEEWGGESQFVHVSAKAGTGIDELLDAILLQAEVLELKAVRKGMASGAVIESFLDKGRGPVATVLVREGTLHKGDIVLCGFEYGRVRAMRNELGQEVLEAGPSIPVEILGLSGVPAAGDEVTVVRDEKKAREVALYRQGKFREVKLARQQKSKLENMFANMTEGEVHEVNIVLKADVQGSVEAISDSLLKLSTDEVKVKIIGSGVGGITETDATLAAASNAILVGFNVRADASARKVIESESLDLRYYSVIYNLIDEVKAAMSGMLSPELKQQIIGLAEVRDVFKSPKFGAIAGCMVTEGTIKRHNPIRVLRDNVVIYEGELESLRRFKDDVNEVRNGMECGIGVKNYNDVRVGDMIEVFEIIEIQRTIA</sequence>